<dbReference type="EMBL" id="AY738747">
    <property type="protein sequence ID" value="AAU85779.1"/>
    <property type="molecule type" value="mRNA"/>
</dbReference>
<dbReference type="EMBL" id="BC121745">
    <property type="protein sequence ID" value="AAI21746.1"/>
    <property type="molecule type" value="mRNA"/>
</dbReference>
<dbReference type="RefSeq" id="NP_001007785.1">
    <property type="nucleotide sequence ID" value="NM_001007784.1"/>
</dbReference>
<dbReference type="SMR" id="Q5XTN8"/>
<dbReference type="FunCoup" id="Q5XTN8">
    <property type="interactions" value="963"/>
</dbReference>
<dbReference type="STRING" id="7955.ENSDARP00000134128"/>
<dbReference type="PaxDb" id="7955-ENSDARP00000105491"/>
<dbReference type="Ensembl" id="ENSDART00000165151">
    <property type="protein sequence ID" value="ENSDARP00000134128"/>
    <property type="gene ID" value="ENSDARG00000102129"/>
</dbReference>
<dbReference type="GeneID" id="493629"/>
<dbReference type="KEGG" id="dre:493629"/>
<dbReference type="AGR" id="ZFIN:ZDB-GENE-050225-1"/>
<dbReference type="CTD" id="493629"/>
<dbReference type="ZFIN" id="ZDB-GENE-050225-1">
    <property type="gene designation" value="crygn1"/>
</dbReference>
<dbReference type="eggNOG" id="ENOG502QV8X">
    <property type="taxonomic scope" value="Eukaryota"/>
</dbReference>
<dbReference type="HOGENOM" id="CLU_081883_1_0_1"/>
<dbReference type="InParanoid" id="Q5XTN8"/>
<dbReference type="OMA" id="WNALNDH"/>
<dbReference type="OrthoDB" id="5976022at2759"/>
<dbReference type="PhylomeDB" id="Q5XTN8"/>
<dbReference type="PRO" id="PR:Q5XTN8"/>
<dbReference type="Proteomes" id="UP000000437">
    <property type="component" value="Chromosome 2"/>
</dbReference>
<dbReference type="Bgee" id="ENSDARG00000102129">
    <property type="expression patterns" value="Expressed in mature ovarian follicle and 15 other cell types or tissues"/>
</dbReference>
<dbReference type="ExpressionAtlas" id="Q5XTN8">
    <property type="expression patterns" value="baseline and differential"/>
</dbReference>
<dbReference type="GO" id="GO:0005212">
    <property type="term" value="F:structural constituent of eye lens"/>
    <property type="evidence" value="ECO:0000318"/>
    <property type="project" value="GO_Central"/>
</dbReference>
<dbReference type="GO" id="GO:0002088">
    <property type="term" value="P:lens development in camera-type eye"/>
    <property type="evidence" value="ECO:0000318"/>
    <property type="project" value="GO_Central"/>
</dbReference>
<dbReference type="GO" id="GO:0007601">
    <property type="term" value="P:visual perception"/>
    <property type="evidence" value="ECO:0000318"/>
    <property type="project" value="GO_Central"/>
</dbReference>
<dbReference type="FunFam" id="2.60.20.10:FF:000007">
    <property type="entry name" value="Crystallin gamma N"/>
    <property type="match status" value="1"/>
</dbReference>
<dbReference type="FunFam" id="2.60.20.10:FF:000003">
    <property type="entry name" value="Crystallin gamma S"/>
    <property type="match status" value="1"/>
</dbReference>
<dbReference type="Gene3D" id="2.60.20.10">
    <property type="entry name" value="Crystallins"/>
    <property type="match status" value="2"/>
</dbReference>
<dbReference type="InterPro" id="IPR050252">
    <property type="entry name" value="Beta/Gamma-Crystallin"/>
</dbReference>
<dbReference type="InterPro" id="IPR001064">
    <property type="entry name" value="Beta/gamma_crystallin"/>
</dbReference>
<dbReference type="InterPro" id="IPR011024">
    <property type="entry name" value="G_crystallin-like"/>
</dbReference>
<dbReference type="PANTHER" id="PTHR11818">
    <property type="entry name" value="BETA/GAMMA CRYSTALLIN"/>
    <property type="match status" value="1"/>
</dbReference>
<dbReference type="PANTHER" id="PTHR11818:SF22">
    <property type="entry name" value="GAMMA-CRYSTALLIN N"/>
    <property type="match status" value="1"/>
</dbReference>
<dbReference type="Pfam" id="PF00030">
    <property type="entry name" value="Crystall"/>
    <property type="match status" value="2"/>
</dbReference>
<dbReference type="PRINTS" id="PR01367">
    <property type="entry name" value="BGCRYSTALLIN"/>
</dbReference>
<dbReference type="SMART" id="SM00247">
    <property type="entry name" value="XTALbg"/>
    <property type="match status" value="2"/>
</dbReference>
<dbReference type="SUPFAM" id="SSF49695">
    <property type="entry name" value="gamma-Crystallin-like"/>
    <property type="match status" value="1"/>
</dbReference>
<dbReference type="PROSITE" id="PS50915">
    <property type="entry name" value="CRYSTALLIN_BETA_GAMMA"/>
    <property type="match status" value="4"/>
</dbReference>
<proteinExistence type="evidence at transcript level"/>
<evidence type="ECO:0000250" key="1"/>
<evidence type="ECO:0000255" key="2">
    <source>
        <dbReference type="PROSITE-ProRule" id="PRU00028"/>
    </source>
</evidence>
<evidence type="ECO:0000305" key="3"/>
<organism>
    <name type="scientific">Danio rerio</name>
    <name type="common">Zebrafish</name>
    <name type="synonym">Brachydanio rerio</name>
    <dbReference type="NCBI Taxonomy" id="7955"/>
    <lineage>
        <taxon>Eukaryota</taxon>
        <taxon>Metazoa</taxon>
        <taxon>Chordata</taxon>
        <taxon>Craniata</taxon>
        <taxon>Vertebrata</taxon>
        <taxon>Euteleostomi</taxon>
        <taxon>Actinopterygii</taxon>
        <taxon>Neopterygii</taxon>
        <taxon>Teleostei</taxon>
        <taxon>Ostariophysi</taxon>
        <taxon>Cypriniformes</taxon>
        <taxon>Danionidae</taxon>
        <taxon>Danioninae</taxon>
        <taxon>Danio</taxon>
    </lineage>
</organism>
<comment type="function">
    <text evidence="1">Crystallins are the dominant structural components of the vertebrate eye lens.</text>
</comment>
<comment type="subunit">
    <text evidence="1">Monomer.</text>
</comment>
<comment type="domain">
    <text evidence="1">Has a two-domain beta-structure, folded into four very similar Greek key motifs.</text>
</comment>
<comment type="similarity">
    <text evidence="3">Belongs to the beta/gamma-crystallin family.</text>
</comment>
<keyword id="KW-0273">Eye lens protein</keyword>
<keyword id="KW-1185">Reference proteome</keyword>
<keyword id="KW-0677">Repeat</keyword>
<sequence length="183" mass="21511">MSQYSGKIVFFEGKCFTGRRLEVFGDCDNFQDRGFMNRVNSIRVESGAWVCFDHPDFKGQQYMLEKGEYPDFQRWNGHNDHMGSCKPIKMHGEQYRMELFEGQNFTGQCVELCDDCPFLQSTGFSKNCLNSIKVYGDGAWAMYEEPNYRGRMYIVERGNYCAFTEWQSENPNIQSIRRVVNYF</sequence>
<gene>
    <name type="primary">crygna</name>
    <name type="synonym">crygn1</name>
    <name type="ORF">zgc:114194</name>
</gene>
<feature type="chain" id="PRO_0000311283" description="Gamma-crystallin N-A">
    <location>
        <begin position="1"/>
        <end position="183"/>
    </location>
</feature>
<feature type="domain" description="Beta/gamma crystallin 'Greek key' 1" evidence="2">
    <location>
        <begin position="6"/>
        <end position="46"/>
    </location>
</feature>
<feature type="domain" description="Beta/gamma crystallin 'Greek key' 2" evidence="2">
    <location>
        <begin position="47"/>
        <end position="89"/>
    </location>
</feature>
<feature type="domain" description="Beta/gamma crystallin 'Greek key' 3" evidence="2">
    <location>
        <begin position="95"/>
        <end position="136"/>
    </location>
</feature>
<feature type="domain" description="Beta/gamma crystallin 'Greek key' 4" evidence="2">
    <location>
        <begin position="138"/>
        <end position="180"/>
    </location>
</feature>
<reference key="1">
    <citation type="journal article" date="2005" name="FEBS J.">
        <title>Gamma-N-crystallin and the evolution of the betagamma-crystallin superfamily in vertebrates.</title>
        <authorList>
            <person name="Wistow G."/>
            <person name="Wyatt K."/>
            <person name="David L."/>
            <person name="Gao C."/>
            <person name="Bateman O."/>
            <person name="Bernstein S."/>
            <person name="Tomarev S."/>
            <person name="Segovia L."/>
            <person name="Slingsby C."/>
            <person name="Vihtelic T."/>
        </authorList>
    </citation>
    <scope>NUCLEOTIDE SEQUENCE [MRNA]</scope>
</reference>
<reference key="2">
    <citation type="submission" date="2006-08" db="EMBL/GenBank/DDBJ databases">
        <authorList>
            <consortium name="NIH - Zebrafish Gene Collection (ZGC) project"/>
        </authorList>
    </citation>
    <scope>NUCLEOTIDE SEQUENCE [LARGE SCALE MRNA]</scope>
    <source>
        <tissue>Eye</tissue>
    </source>
</reference>
<accession>Q5XTN8</accession>
<protein>
    <recommendedName>
        <fullName>Gamma-crystallin N-A</fullName>
    </recommendedName>
    <alternativeName>
        <fullName>Gamma-N-crystallin-A</fullName>
    </alternativeName>
    <alternativeName>
        <fullName>GammaN1-crystallin</fullName>
    </alternativeName>
</protein>
<name>CRGNA_DANRE</name>